<name>ASNC_ECO57</name>
<sequence>MENYLIDNLDRGILEALMGNARTAYAELAKQFGVSPGTIHVRVEKMKQAGIITGARIDVSPKQLGYDVGCFIGIILKSAKDYPSALAKLESLDEVTEAYYTTGHYSIFIKVMCRSIDALQHVLINKIQTIDEIQSTETLIVLQNPIMRTIKP</sequence>
<evidence type="ECO:0000250" key="1"/>
<evidence type="ECO:0000255" key="2">
    <source>
        <dbReference type="PROSITE-ProRule" id="PRU00319"/>
    </source>
</evidence>
<dbReference type="EMBL" id="AE005174">
    <property type="protein sequence ID" value="AAG58946.1"/>
    <property type="molecule type" value="Genomic_DNA"/>
</dbReference>
<dbReference type="EMBL" id="BA000007">
    <property type="protein sequence ID" value="BAB38108.1"/>
    <property type="molecule type" value="Genomic_DNA"/>
</dbReference>
<dbReference type="PIR" id="E91214">
    <property type="entry name" value="E91214"/>
</dbReference>
<dbReference type="PIR" id="F86060">
    <property type="entry name" value="F86060"/>
</dbReference>
<dbReference type="RefSeq" id="NP_312712.1">
    <property type="nucleotide sequence ID" value="NC_002695.1"/>
</dbReference>
<dbReference type="RefSeq" id="WP_000432970.1">
    <property type="nucleotide sequence ID" value="NZ_VOAI01000011.1"/>
</dbReference>
<dbReference type="SMR" id="P0ACI8"/>
<dbReference type="STRING" id="155864.Z5244"/>
<dbReference type="GeneID" id="86861851"/>
<dbReference type="GeneID" id="915327"/>
<dbReference type="KEGG" id="ece:Z5244"/>
<dbReference type="KEGG" id="ecs:ECs_4685"/>
<dbReference type="PATRIC" id="fig|386585.9.peg.4891"/>
<dbReference type="eggNOG" id="COG1522">
    <property type="taxonomic scope" value="Bacteria"/>
</dbReference>
<dbReference type="HOGENOM" id="CLU_091233_5_0_6"/>
<dbReference type="OMA" id="EDCWFIA"/>
<dbReference type="Proteomes" id="UP000000558">
    <property type="component" value="Chromosome"/>
</dbReference>
<dbReference type="Proteomes" id="UP000002519">
    <property type="component" value="Chromosome"/>
</dbReference>
<dbReference type="GO" id="GO:0005829">
    <property type="term" value="C:cytosol"/>
    <property type="evidence" value="ECO:0007669"/>
    <property type="project" value="TreeGrafter"/>
</dbReference>
<dbReference type="GO" id="GO:0043565">
    <property type="term" value="F:sequence-specific DNA binding"/>
    <property type="evidence" value="ECO:0007669"/>
    <property type="project" value="InterPro"/>
</dbReference>
<dbReference type="GO" id="GO:0006355">
    <property type="term" value="P:regulation of DNA-templated transcription"/>
    <property type="evidence" value="ECO:0007669"/>
    <property type="project" value="UniProtKB-ARBA"/>
</dbReference>
<dbReference type="GO" id="GO:0043200">
    <property type="term" value="P:response to amino acid"/>
    <property type="evidence" value="ECO:0007669"/>
    <property type="project" value="TreeGrafter"/>
</dbReference>
<dbReference type="CDD" id="cd00090">
    <property type="entry name" value="HTH_ARSR"/>
    <property type="match status" value="1"/>
</dbReference>
<dbReference type="FunFam" id="1.10.10.10:FF:000078">
    <property type="entry name" value="Transcriptional regulator AsnC"/>
    <property type="match status" value="1"/>
</dbReference>
<dbReference type="FunFam" id="3.30.70.920:FF:000002">
    <property type="entry name" value="Transcriptional regulator AsnC"/>
    <property type="match status" value="1"/>
</dbReference>
<dbReference type="Gene3D" id="3.30.70.920">
    <property type="match status" value="1"/>
</dbReference>
<dbReference type="Gene3D" id="1.10.10.10">
    <property type="entry name" value="Winged helix-like DNA-binding domain superfamily/Winged helix DNA-binding domain"/>
    <property type="match status" value="1"/>
</dbReference>
<dbReference type="InterPro" id="IPR011991">
    <property type="entry name" value="ArsR-like_HTH"/>
</dbReference>
<dbReference type="InterPro" id="IPR000485">
    <property type="entry name" value="AsnC-type_HTH_dom"/>
</dbReference>
<dbReference type="InterPro" id="IPR011008">
    <property type="entry name" value="Dimeric_a/b-barrel"/>
</dbReference>
<dbReference type="InterPro" id="IPR019888">
    <property type="entry name" value="Tscrpt_reg_AsnC-like"/>
</dbReference>
<dbReference type="InterPro" id="IPR019887">
    <property type="entry name" value="Tscrpt_reg_AsnC/Lrp_C"/>
</dbReference>
<dbReference type="InterPro" id="IPR019885">
    <property type="entry name" value="Tscrpt_reg_HTH_AsnC-type_CS"/>
</dbReference>
<dbReference type="InterPro" id="IPR036388">
    <property type="entry name" value="WH-like_DNA-bd_sf"/>
</dbReference>
<dbReference type="InterPro" id="IPR036390">
    <property type="entry name" value="WH_DNA-bd_sf"/>
</dbReference>
<dbReference type="NCBIfam" id="NF008384">
    <property type="entry name" value="PRK11179.1"/>
    <property type="match status" value="1"/>
</dbReference>
<dbReference type="PANTHER" id="PTHR30154">
    <property type="entry name" value="LEUCINE-RESPONSIVE REGULATORY PROTEIN"/>
    <property type="match status" value="1"/>
</dbReference>
<dbReference type="PANTHER" id="PTHR30154:SF34">
    <property type="entry name" value="TRANSCRIPTIONAL REGULATOR AZLB"/>
    <property type="match status" value="1"/>
</dbReference>
<dbReference type="Pfam" id="PF01037">
    <property type="entry name" value="AsnC_trans_reg"/>
    <property type="match status" value="1"/>
</dbReference>
<dbReference type="Pfam" id="PF13412">
    <property type="entry name" value="HTH_24"/>
    <property type="match status" value="1"/>
</dbReference>
<dbReference type="PRINTS" id="PR00033">
    <property type="entry name" value="HTHASNC"/>
</dbReference>
<dbReference type="SMART" id="SM00344">
    <property type="entry name" value="HTH_ASNC"/>
    <property type="match status" value="1"/>
</dbReference>
<dbReference type="SUPFAM" id="SSF54909">
    <property type="entry name" value="Dimeric alpha+beta barrel"/>
    <property type="match status" value="1"/>
</dbReference>
<dbReference type="SUPFAM" id="SSF46785">
    <property type="entry name" value="Winged helix' DNA-binding domain"/>
    <property type="match status" value="1"/>
</dbReference>
<dbReference type="PROSITE" id="PS00519">
    <property type="entry name" value="HTH_ASNC_1"/>
    <property type="match status" value="1"/>
</dbReference>
<dbReference type="PROSITE" id="PS50956">
    <property type="entry name" value="HTH_ASNC_2"/>
    <property type="match status" value="1"/>
</dbReference>
<proteinExistence type="inferred from homology"/>
<accession>P0ACI8</accession>
<accession>P03809</accession>
<reference key="1">
    <citation type="journal article" date="2001" name="Nature">
        <title>Genome sequence of enterohaemorrhagic Escherichia coli O157:H7.</title>
        <authorList>
            <person name="Perna N.T."/>
            <person name="Plunkett G. III"/>
            <person name="Burland V."/>
            <person name="Mau B."/>
            <person name="Glasner J.D."/>
            <person name="Rose D.J."/>
            <person name="Mayhew G.F."/>
            <person name="Evans P.S."/>
            <person name="Gregor J."/>
            <person name="Kirkpatrick H.A."/>
            <person name="Posfai G."/>
            <person name="Hackett J."/>
            <person name="Klink S."/>
            <person name="Boutin A."/>
            <person name="Shao Y."/>
            <person name="Miller L."/>
            <person name="Grotbeck E.J."/>
            <person name="Davis N.W."/>
            <person name="Lim A."/>
            <person name="Dimalanta E.T."/>
            <person name="Potamousis K."/>
            <person name="Apodaca J."/>
            <person name="Anantharaman T.S."/>
            <person name="Lin J."/>
            <person name="Yen G."/>
            <person name="Schwartz D.C."/>
            <person name="Welch R.A."/>
            <person name="Blattner F.R."/>
        </authorList>
    </citation>
    <scope>NUCLEOTIDE SEQUENCE [LARGE SCALE GENOMIC DNA]</scope>
    <source>
        <strain>O157:H7 / EDL933 / ATCC 700927 / EHEC</strain>
    </source>
</reference>
<reference key="2">
    <citation type="journal article" date="2001" name="DNA Res.">
        <title>Complete genome sequence of enterohemorrhagic Escherichia coli O157:H7 and genomic comparison with a laboratory strain K-12.</title>
        <authorList>
            <person name="Hayashi T."/>
            <person name="Makino K."/>
            <person name="Ohnishi M."/>
            <person name="Kurokawa K."/>
            <person name="Ishii K."/>
            <person name="Yokoyama K."/>
            <person name="Han C.-G."/>
            <person name="Ohtsubo E."/>
            <person name="Nakayama K."/>
            <person name="Murata T."/>
            <person name="Tanaka M."/>
            <person name="Tobe T."/>
            <person name="Iida T."/>
            <person name="Takami H."/>
            <person name="Honda T."/>
            <person name="Sasakawa C."/>
            <person name="Ogasawara N."/>
            <person name="Yasunaga T."/>
            <person name="Kuhara S."/>
            <person name="Shiba T."/>
            <person name="Hattori M."/>
            <person name="Shinagawa H."/>
        </authorList>
    </citation>
    <scope>NUCLEOTIDE SEQUENCE [LARGE SCALE GENOMIC DNA]</scope>
    <source>
        <strain>O157:H7 / Sakai / RIMD 0509952 / EHEC</strain>
    </source>
</reference>
<keyword id="KW-0010">Activator</keyword>
<keyword id="KW-0238">DNA-binding</keyword>
<keyword id="KW-1185">Reference proteome</keyword>
<keyword id="KW-0804">Transcription</keyword>
<keyword id="KW-0805">Transcription regulation</keyword>
<gene>
    <name type="primary">asnC</name>
    <name type="ordered locus">Z5244</name>
    <name type="ordered locus">ECs4685</name>
</gene>
<feature type="chain" id="PRO_0000111720" description="Regulatory protein AsnC">
    <location>
        <begin position="1"/>
        <end position="152"/>
    </location>
</feature>
<feature type="domain" description="HTH asnC-type" evidence="2">
    <location>
        <begin position="6"/>
        <end position="67"/>
    </location>
</feature>
<feature type="DNA-binding region" description="H-T-H motif" evidence="2">
    <location>
        <begin position="25"/>
        <end position="44"/>
    </location>
</feature>
<comment type="function">
    <text evidence="1">Activator of asnA transcription; autogenous regulator of its own transcription; and repressor of the expression of gidA at a post-transcriptional level.</text>
</comment>
<organism>
    <name type="scientific">Escherichia coli O157:H7</name>
    <dbReference type="NCBI Taxonomy" id="83334"/>
    <lineage>
        <taxon>Bacteria</taxon>
        <taxon>Pseudomonadati</taxon>
        <taxon>Pseudomonadota</taxon>
        <taxon>Gammaproteobacteria</taxon>
        <taxon>Enterobacterales</taxon>
        <taxon>Enterobacteriaceae</taxon>
        <taxon>Escherichia</taxon>
    </lineage>
</organism>
<protein>
    <recommendedName>
        <fullName>Regulatory protein AsnC</fullName>
    </recommendedName>
</protein>